<name>DNLJ_YERP3</name>
<comment type="function">
    <text evidence="1">DNA ligase that catalyzes the formation of phosphodiester linkages between 5'-phosphoryl and 3'-hydroxyl groups in double-stranded DNA using NAD as a coenzyme and as the energy source for the reaction. It is essential for DNA replication and repair of damaged DNA.</text>
</comment>
<comment type="catalytic activity">
    <reaction evidence="1">
        <text>NAD(+) + (deoxyribonucleotide)n-3'-hydroxyl + 5'-phospho-(deoxyribonucleotide)m = (deoxyribonucleotide)n+m + AMP + beta-nicotinamide D-nucleotide.</text>
        <dbReference type="EC" id="6.5.1.2"/>
    </reaction>
</comment>
<comment type="cofactor">
    <cofactor evidence="1">
        <name>Mg(2+)</name>
        <dbReference type="ChEBI" id="CHEBI:18420"/>
    </cofactor>
    <cofactor evidence="1">
        <name>Mn(2+)</name>
        <dbReference type="ChEBI" id="CHEBI:29035"/>
    </cofactor>
</comment>
<comment type="similarity">
    <text evidence="1">Belongs to the NAD-dependent DNA ligase family. LigA subfamily.</text>
</comment>
<reference key="1">
    <citation type="journal article" date="2007" name="PLoS Genet.">
        <title>The complete genome sequence of Yersinia pseudotuberculosis IP31758, the causative agent of Far East scarlet-like fever.</title>
        <authorList>
            <person name="Eppinger M."/>
            <person name="Rosovitz M.J."/>
            <person name="Fricke W.F."/>
            <person name="Rasko D.A."/>
            <person name="Kokorina G."/>
            <person name="Fayolle C."/>
            <person name="Lindler L.E."/>
            <person name="Carniel E."/>
            <person name="Ravel J."/>
        </authorList>
    </citation>
    <scope>NUCLEOTIDE SEQUENCE [LARGE SCALE GENOMIC DNA]</scope>
    <source>
        <strain>IP 31758</strain>
    </source>
</reference>
<organism>
    <name type="scientific">Yersinia pseudotuberculosis serotype O:1b (strain IP 31758)</name>
    <dbReference type="NCBI Taxonomy" id="349747"/>
    <lineage>
        <taxon>Bacteria</taxon>
        <taxon>Pseudomonadati</taxon>
        <taxon>Pseudomonadota</taxon>
        <taxon>Gammaproteobacteria</taxon>
        <taxon>Enterobacterales</taxon>
        <taxon>Yersiniaceae</taxon>
        <taxon>Yersinia</taxon>
    </lineage>
</organism>
<gene>
    <name evidence="1" type="primary">ligA</name>
    <name type="ordered locus">YpsIP31758_1321</name>
</gene>
<accession>A7FGC2</accession>
<protein>
    <recommendedName>
        <fullName evidence="1">DNA ligase</fullName>
        <ecNumber evidence="1">6.5.1.2</ecNumber>
    </recommendedName>
    <alternativeName>
        <fullName evidence="1">Polydeoxyribonucleotide synthase [NAD(+)]</fullName>
    </alternativeName>
</protein>
<dbReference type="EC" id="6.5.1.2" evidence="1"/>
<dbReference type="EMBL" id="CP000720">
    <property type="protein sequence ID" value="ABS47160.1"/>
    <property type="molecule type" value="Genomic_DNA"/>
</dbReference>
<dbReference type="RefSeq" id="WP_012104854.1">
    <property type="nucleotide sequence ID" value="NC_009708.1"/>
</dbReference>
<dbReference type="SMR" id="A7FGC2"/>
<dbReference type="KEGG" id="ypi:YpsIP31758_1321"/>
<dbReference type="HOGENOM" id="CLU_007764_2_1_6"/>
<dbReference type="Proteomes" id="UP000002412">
    <property type="component" value="Chromosome"/>
</dbReference>
<dbReference type="GO" id="GO:0005829">
    <property type="term" value="C:cytosol"/>
    <property type="evidence" value="ECO:0007669"/>
    <property type="project" value="TreeGrafter"/>
</dbReference>
<dbReference type="GO" id="GO:0003677">
    <property type="term" value="F:DNA binding"/>
    <property type="evidence" value="ECO:0007669"/>
    <property type="project" value="InterPro"/>
</dbReference>
<dbReference type="GO" id="GO:0003911">
    <property type="term" value="F:DNA ligase (NAD+) activity"/>
    <property type="evidence" value="ECO:0007669"/>
    <property type="project" value="UniProtKB-UniRule"/>
</dbReference>
<dbReference type="GO" id="GO:0046872">
    <property type="term" value="F:metal ion binding"/>
    <property type="evidence" value="ECO:0007669"/>
    <property type="project" value="UniProtKB-KW"/>
</dbReference>
<dbReference type="GO" id="GO:0006281">
    <property type="term" value="P:DNA repair"/>
    <property type="evidence" value="ECO:0007669"/>
    <property type="project" value="UniProtKB-KW"/>
</dbReference>
<dbReference type="GO" id="GO:0006260">
    <property type="term" value="P:DNA replication"/>
    <property type="evidence" value="ECO:0007669"/>
    <property type="project" value="UniProtKB-KW"/>
</dbReference>
<dbReference type="CDD" id="cd17748">
    <property type="entry name" value="BRCT_DNA_ligase_like"/>
    <property type="match status" value="1"/>
</dbReference>
<dbReference type="CDD" id="cd00114">
    <property type="entry name" value="LIGANc"/>
    <property type="match status" value="1"/>
</dbReference>
<dbReference type="FunFam" id="1.10.150.20:FF:000006">
    <property type="entry name" value="DNA ligase"/>
    <property type="match status" value="1"/>
</dbReference>
<dbReference type="FunFam" id="1.10.150.20:FF:000007">
    <property type="entry name" value="DNA ligase"/>
    <property type="match status" value="1"/>
</dbReference>
<dbReference type="FunFam" id="1.10.287.610:FF:000002">
    <property type="entry name" value="DNA ligase"/>
    <property type="match status" value="1"/>
</dbReference>
<dbReference type="FunFam" id="2.40.50.140:FF:000012">
    <property type="entry name" value="DNA ligase"/>
    <property type="match status" value="1"/>
</dbReference>
<dbReference type="FunFam" id="3.30.470.30:FF:000001">
    <property type="entry name" value="DNA ligase"/>
    <property type="match status" value="1"/>
</dbReference>
<dbReference type="FunFam" id="3.40.50.10190:FF:000004">
    <property type="entry name" value="DNA ligase"/>
    <property type="match status" value="1"/>
</dbReference>
<dbReference type="FunFam" id="6.20.10.30:FF:000001">
    <property type="entry name" value="DNA ligase"/>
    <property type="match status" value="1"/>
</dbReference>
<dbReference type="Gene3D" id="6.20.10.30">
    <property type="match status" value="1"/>
</dbReference>
<dbReference type="Gene3D" id="1.10.150.20">
    <property type="entry name" value="5' to 3' exonuclease, C-terminal subdomain"/>
    <property type="match status" value="2"/>
</dbReference>
<dbReference type="Gene3D" id="3.40.50.10190">
    <property type="entry name" value="BRCT domain"/>
    <property type="match status" value="1"/>
</dbReference>
<dbReference type="Gene3D" id="3.30.470.30">
    <property type="entry name" value="DNA ligase/mRNA capping enzyme"/>
    <property type="match status" value="1"/>
</dbReference>
<dbReference type="Gene3D" id="1.10.287.610">
    <property type="entry name" value="Helix hairpin bin"/>
    <property type="match status" value="1"/>
</dbReference>
<dbReference type="Gene3D" id="2.40.50.140">
    <property type="entry name" value="Nucleic acid-binding proteins"/>
    <property type="match status" value="1"/>
</dbReference>
<dbReference type="HAMAP" id="MF_01588">
    <property type="entry name" value="DNA_ligase_A"/>
    <property type="match status" value="1"/>
</dbReference>
<dbReference type="InterPro" id="IPR001357">
    <property type="entry name" value="BRCT_dom"/>
</dbReference>
<dbReference type="InterPro" id="IPR036420">
    <property type="entry name" value="BRCT_dom_sf"/>
</dbReference>
<dbReference type="InterPro" id="IPR041663">
    <property type="entry name" value="DisA/LigA_HHH"/>
</dbReference>
<dbReference type="InterPro" id="IPR001679">
    <property type="entry name" value="DNA_ligase"/>
</dbReference>
<dbReference type="InterPro" id="IPR018239">
    <property type="entry name" value="DNA_ligase_AS"/>
</dbReference>
<dbReference type="InterPro" id="IPR033136">
    <property type="entry name" value="DNA_ligase_CS"/>
</dbReference>
<dbReference type="InterPro" id="IPR013839">
    <property type="entry name" value="DNAligase_adenylation"/>
</dbReference>
<dbReference type="InterPro" id="IPR013840">
    <property type="entry name" value="DNAligase_N"/>
</dbReference>
<dbReference type="InterPro" id="IPR003583">
    <property type="entry name" value="Hlx-hairpin-Hlx_DNA-bd_motif"/>
</dbReference>
<dbReference type="InterPro" id="IPR012340">
    <property type="entry name" value="NA-bd_OB-fold"/>
</dbReference>
<dbReference type="InterPro" id="IPR004150">
    <property type="entry name" value="NAD_DNA_ligase_OB"/>
</dbReference>
<dbReference type="InterPro" id="IPR010994">
    <property type="entry name" value="RuvA_2-like"/>
</dbReference>
<dbReference type="InterPro" id="IPR004149">
    <property type="entry name" value="Znf_DNAligase_C4"/>
</dbReference>
<dbReference type="NCBIfam" id="TIGR00575">
    <property type="entry name" value="dnlj"/>
    <property type="match status" value="1"/>
</dbReference>
<dbReference type="NCBIfam" id="NF005932">
    <property type="entry name" value="PRK07956.1"/>
    <property type="match status" value="1"/>
</dbReference>
<dbReference type="PANTHER" id="PTHR23389">
    <property type="entry name" value="CHROMOSOME TRANSMISSION FIDELITY FACTOR 18"/>
    <property type="match status" value="1"/>
</dbReference>
<dbReference type="PANTHER" id="PTHR23389:SF9">
    <property type="entry name" value="DNA LIGASE"/>
    <property type="match status" value="1"/>
</dbReference>
<dbReference type="Pfam" id="PF00533">
    <property type="entry name" value="BRCT"/>
    <property type="match status" value="1"/>
</dbReference>
<dbReference type="Pfam" id="PF01653">
    <property type="entry name" value="DNA_ligase_aden"/>
    <property type="match status" value="1"/>
</dbReference>
<dbReference type="Pfam" id="PF03120">
    <property type="entry name" value="DNA_ligase_OB"/>
    <property type="match status" value="1"/>
</dbReference>
<dbReference type="Pfam" id="PF03119">
    <property type="entry name" value="DNA_ligase_ZBD"/>
    <property type="match status" value="1"/>
</dbReference>
<dbReference type="Pfam" id="PF12826">
    <property type="entry name" value="HHH_2"/>
    <property type="match status" value="1"/>
</dbReference>
<dbReference type="Pfam" id="PF14520">
    <property type="entry name" value="HHH_5"/>
    <property type="match status" value="1"/>
</dbReference>
<dbReference type="Pfam" id="PF22745">
    <property type="entry name" value="Nlig-Ia"/>
    <property type="match status" value="1"/>
</dbReference>
<dbReference type="PIRSF" id="PIRSF001604">
    <property type="entry name" value="LigA"/>
    <property type="match status" value="1"/>
</dbReference>
<dbReference type="SMART" id="SM00292">
    <property type="entry name" value="BRCT"/>
    <property type="match status" value="1"/>
</dbReference>
<dbReference type="SMART" id="SM00278">
    <property type="entry name" value="HhH1"/>
    <property type="match status" value="4"/>
</dbReference>
<dbReference type="SMART" id="SM00532">
    <property type="entry name" value="LIGANc"/>
    <property type="match status" value="1"/>
</dbReference>
<dbReference type="SUPFAM" id="SSF52113">
    <property type="entry name" value="BRCT domain"/>
    <property type="match status" value="1"/>
</dbReference>
<dbReference type="SUPFAM" id="SSF56091">
    <property type="entry name" value="DNA ligase/mRNA capping enzyme, catalytic domain"/>
    <property type="match status" value="1"/>
</dbReference>
<dbReference type="SUPFAM" id="SSF50249">
    <property type="entry name" value="Nucleic acid-binding proteins"/>
    <property type="match status" value="1"/>
</dbReference>
<dbReference type="SUPFAM" id="SSF47781">
    <property type="entry name" value="RuvA domain 2-like"/>
    <property type="match status" value="1"/>
</dbReference>
<dbReference type="PROSITE" id="PS50172">
    <property type="entry name" value="BRCT"/>
    <property type="match status" value="1"/>
</dbReference>
<dbReference type="PROSITE" id="PS01055">
    <property type="entry name" value="DNA_LIGASE_N1"/>
    <property type="match status" value="1"/>
</dbReference>
<dbReference type="PROSITE" id="PS01056">
    <property type="entry name" value="DNA_LIGASE_N2"/>
    <property type="match status" value="1"/>
</dbReference>
<keyword id="KW-0227">DNA damage</keyword>
<keyword id="KW-0234">DNA repair</keyword>
<keyword id="KW-0235">DNA replication</keyword>
<keyword id="KW-0436">Ligase</keyword>
<keyword id="KW-0460">Magnesium</keyword>
<keyword id="KW-0464">Manganese</keyword>
<keyword id="KW-0479">Metal-binding</keyword>
<keyword id="KW-0520">NAD</keyword>
<keyword id="KW-0862">Zinc</keyword>
<proteinExistence type="inferred from homology"/>
<evidence type="ECO:0000255" key="1">
    <source>
        <dbReference type="HAMAP-Rule" id="MF_01588"/>
    </source>
</evidence>
<sequence>MESIIQQINQLRTSLRHHEHQYHVLDAPEIPDAEYDRMMQQLRDLEAQHPELVTNDSPTQRVGAAPLDAFEQVEHEVPMLSLDNVFDEESYLAFDKRVHDRLKTAEPLTFCCELKLDGLAVSLLYENGELVRAATRGDGTTGENITANVRTIRAIPLRLHGDNVPRRVEVRGEVFMPQAGFEQLNEEARRKGGKVFANPRNAAAGSLRQLDPRITAKRPLTFFCYGVGLLDGGELPRSHIQCLMQFKAWGLPVSERVKLCTGSDQVIAFYRQIEQDRAGLGFDIDGVVIKVDDLVLQEQLGFVARAPRWATAFKFPAQEQITQVREVEFQVGRTGAITPVARLEPVQVAGVIVSNATLHNADEIERLGLRIGDTVIVRRAGDVIPQVVGVVMEQRPDDTKEITFPSQCPVCGSDIERVEGEAVARCTGGLFCAAQRKEALKHFVSRRALDVDGMGDKIIEQLVEKQYVENPADLFQLTAGKLTGLDRMGPKSAQNLIAALEKAKQTTFARFLYALGIREVGEATAANLAAHFRTLDNLRAADIETLKSVPDVGEVVAKHVMNFLSEEHNQKVIEELEKVVSWPEPQQIVVEEIDSPFAGKTVVLTGSLTILSRDEAKDRLTALGAKVSGSVSKKTHLVIAGEAAGSKLAKAQELGIKVIDEAEMIRLLGE</sequence>
<feature type="chain" id="PRO_0000340395" description="DNA ligase">
    <location>
        <begin position="1"/>
        <end position="670"/>
    </location>
</feature>
<feature type="domain" description="BRCT" evidence="1">
    <location>
        <begin position="592"/>
        <end position="670"/>
    </location>
</feature>
<feature type="active site" description="N6-AMP-lysine intermediate" evidence="1">
    <location>
        <position position="115"/>
    </location>
</feature>
<feature type="binding site" evidence="1">
    <location>
        <begin position="32"/>
        <end position="36"/>
    </location>
    <ligand>
        <name>NAD(+)</name>
        <dbReference type="ChEBI" id="CHEBI:57540"/>
    </ligand>
</feature>
<feature type="binding site" evidence="1">
    <location>
        <begin position="81"/>
        <end position="82"/>
    </location>
    <ligand>
        <name>NAD(+)</name>
        <dbReference type="ChEBI" id="CHEBI:57540"/>
    </ligand>
</feature>
<feature type="binding site" evidence="1">
    <location>
        <position position="113"/>
    </location>
    <ligand>
        <name>NAD(+)</name>
        <dbReference type="ChEBI" id="CHEBI:57540"/>
    </ligand>
</feature>
<feature type="binding site" evidence="1">
    <location>
        <position position="136"/>
    </location>
    <ligand>
        <name>NAD(+)</name>
        <dbReference type="ChEBI" id="CHEBI:57540"/>
    </ligand>
</feature>
<feature type="binding site" evidence="1">
    <location>
        <position position="173"/>
    </location>
    <ligand>
        <name>NAD(+)</name>
        <dbReference type="ChEBI" id="CHEBI:57540"/>
    </ligand>
</feature>
<feature type="binding site" evidence="1">
    <location>
        <position position="290"/>
    </location>
    <ligand>
        <name>NAD(+)</name>
        <dbReference type="ChEBI" id="CHEBI:57540"/>
    </ligand>
</feature>
<feature type="binding site" evidence="1">
    <location>
        <position position="314"/>
    </location>
    <ligand>
        <name>NAD(+)</name>
        <dbReference type="ChEBI" id="CHEBI:57540"/>
    </ligand>
</feature>
<feature type="binding site" evidence="1">
    <location>
        <position position="408"/>
    </location>
    <ligand>
        <name>Zn(2+)</name>
        <dbReference type="ChEBI" id="CHEBI:29105"/>
    </ligand>
</feature>
<feature type="binding site" evidence="1">
    <location>
        <position position="411"/>
    </location>
    <ligand>
        <name>Zn(2+)</name>
        <dbReference type="ChEBI" id="CHEBI:29105"/>
    </ligand>
</feature>
<feature type="binding site" evidence="1">
    <location>
        <position position="426"/>
    </location>
    <ligand>
        <name>Zn(2+)</name>
        <dbReference type="ChEBI" id="CHEBI:29105"/>
    </ligand>
</feature>
<feature type="binding site" evidence="1">
    <location>
        <position position="432"/>
    </location>
    <ligand>
        <name>Zn(2+)</name>
        <dbReference type="ChEBI" id="CHEBI:29105"/>
    </ligand>
</feature>